<evidence type="ECO:0000250" key="1"/>
<evidence type="ECO:0000250" key="2">
    <source>
        <dbReference type="UniProtKB" id="P01106"/>
    </source>
</evidence>
<evidence type="ECO:0000255" key="3">
    <source>
        <dbReference type="PROSITE-ProRule" id="PRU00981"/>
    </source>
</evidence>
<evidence type="ECO:0000256" key="4">
    <source>
        <dbReference type="SAM" id="MobiDB-lite"/>
    </source>
</evidence>
<evidence type="ECO:0000305" key="5"/>
<sequence>MPLNANFPSKNYDYDYDLQPCFFFLEEENFYHQQSRLQPPAPSEDIWKKFELLPTPPLSPSRRSSQSSLFPSTADQLEMVTEFLGGDMVNQSFICEADDEALLKSIVIQDCMWSGFSAAAKLEKVVSEKLASYQASRKESALSSSSPCQSQPPPSPLKSPSCHGSLSLGGTHRSSHGFLQDPSSDCVDPSVVFPYPLNDSISNASSPCQDLILETPPISSNSSSSESEEEPEDEDEDCDEEEEIDVVTVEKRQSASKRVESSSHSQPSRPHYSPLVLKRCHVPIHQHNYAASPSTKVDYVSSKRAKLESNIRVLKQISNNRKCASPRSSDSEENDKRKTHNVLERQRRNELKLSFFALRDQVPEVASNEKAPKVVILKKATEYAISLQEDERRLIRETEQLKYRKEQLKQRLQQLRNFV</sequence>
<name>MYC1_XENLA</name>
<keyword id="KW-0010">Activator</keyword>
<keyword id="KW-0238">DNA-binding</keyword>
<keyword id="KW-0539">Nucleus</keyword>
<keyword id="KW-1185">Reference proteome</keyword>
<keyword id="KW-0804">Transcription</keyword>
<keyword id="KW-0805">Transcription regulation</keyword>
<organism>
    <name type="scientific">Xenopus laevis</name>
    <name type="common">African clawed frog</name>
    <dbReference type="NCBI Taxonomy" id="8355"/>
    <lineage>
        <taxon>Eukaryota</taxon>
        <taxon>Metazoa</taxon>
        <taxon>Chordata</taxon>
        <taxon>Craniata</taxon>
        <taxon>Vertebrata</taxon>
        <taxon>Euteleostomi</taxon>
        <taxon>Amphibia</taxon>
        <taxon>Batrachia</taxon>
        <taxon>Anura</taxon>
        <taxon>Pipoidea</taxon>
        <taxon>Pipidae</taxon>
        <taxon>Xenopodinae</taxon>
        <taxon>Xenopus</taxon>
        <taxon>Xenopus</taxon>
    </lineage>
</organism>
<proteinExistence type="evidence at transcript level"/>
<dbReference type="EMBL" id="M14455">
    <property type="protein sequence ID" value="AAA49905.1"/>
    <property type="molecule type" value="mRNA"/>
</dbReference>
<dbReference type="EMBL" id="X14806">
    <property type="protein sequence ID" value="CAA32911.1"/>
    <property type="molecule type" value="mRNA"/>
</dbReference>
<dbReference type="EMBL" id="X53717">
    <property type="protein sequence ID" value="CAA37753.1"/>
    <property type="molecule type" value="Genomic_DNA"/>
</dbReference>
<dbReference type="EMBL" id="BC041189">
    <property type="protein sequence ID" value="AAH41189.2"/>
    <property type="molecule type" value="mRNA"/>
</dbReference>
<dbReference type="EMBL" id="X56871">
    <property type="protein sequence ID" value="CAA40195.1"/>
    <property type="molecule type" value="Genomic_DNA"/>
</dbReference>
<dbReference type="EMBL" id="M26285">
    <property type="protein sequence ID" value="AAA49906.1"/>
    <property type="molecule type" value="mRNA"/>
</dbReference>
<dbReference type="PIR" id="A25392">
    <property type="entry name" value="TVXLMC"/>
</dbReference>
<dbReference type="SMR" id="P06171"/>
<dbReference type="AGR" id="Xenbase:XB-GENE-6053022"/>
<dbReference type="Xenbase" id="XB-GENE-6053022">
    <property type="gene designation" value="myc.S"/>
</dbReference>
<dbReference type="Proteomes" id="UP000186698">
    <property type="component" value="Unplaced"/>
</dbReference>
<dbReference type="GO" id="GO:0005634">
    <property type="term" value="C:nucleus"/>
    <property type="evidence" value="ECO:0007669"/>
    <property type="project" value="UniProtKB-SubCell"/>
</dbReference>
<dbReference type="GO" id="GO:0000981">
    <property type="term" value="F:DNA-binding transcription factor activity, RNA polymerase II-specific"/>
    <property type="evidence" value="ECO:0000250"/>
    <property type="project" value="UniProtKB"/>
</dbReference>
<dbReference type="GO" id="GO:0046983">
    <property type="term" value="F:protein dimerization activity"/>
    <property type="evidence" value="ECO:0007669"/>
    <property type="project" value="InterPro"/>
</dbReference>
<dbReference type="GO" id="GO:0000978">
    <property type="term" value="F:RNA polymerase II cis-regulatory region sequence-specific DNA binding"/>
    <property type="evidence" value="ECO:0000318"/>
    <property type="project" value="GO_Central"/>
</dbReference>
<dbReference type="GO" id="GO:0008284">
    <property type="term" value="P:positive regulation of cell population proliferation"/>
    <property type="evidence" value="ECO:0000318"/>
    <property type="project" value="GO_Central"/>
</dbReference>
<dbReference type="GO" id="GO:0006357">
    <property type="term" value="P:regulation of transcription by RNA polymerase II"/>
    <property type="evidence" value="ECO:0000318"/>
    <property type="project" value="GO_Central"/>
</dbReference>
<dbReference type="CDD" id="cd11458">
    <property type="entry name" value="bHLHzip_c-Myc"/>
    <property type="match status" value="1"/>
</dbReference>
<dbReference type="FunFam" id="4.10.280.10:FF:000019">
    <property type="entry name" value="Myc proto-oncogene protein"/>
    <property type="match status" value="1"/>
</dbReference>
<dbReference type="Gene3D" id="4.10.280.10">
    <property type="entry name" value="Helix-loop-helix DNA-binding domain"/>
    <property type="match status" value="1"/>
</dbReference>
<dbReference type="InterPro" id="IPR011598">
    <property type="entry name" value="bHLH_dom"/>
</dbReference>
<dbReference type="InterPro" id="IPR036638">
    <property type="entry name" value="HLH_DNA-bd_sf"/>
</dbReference>
<dbReference type="InterPro" id="IPR003327">
    <property type="entry name" value="Myc-LZ"/>
</dbReference>
<dbReference type="InterPro" id="IPR050433">
    <property type="entry name" value="Myc_transcription_factors"/>
</dbReference>
<dbReference type="InterPro" id="IPR002418">
    <property type="entry name" value="Tscrpt_reg_Myc"/>
</dbReference>
<dbReference type="InterPro" id="IPR012682">
    <property type="entry name" value="Tscrpt_reg_Myc_N"/>
</dbReference>
<dbReference type="PANTHER" id="PTHR45851">
    <property type="entry name" value="MYC PROTO-ONCOGENE"/>
    <property type="match status" value="1"/>
</dbReference>
<dbReference type="Pfam" id="PF00010">
    <property type="entry name" value="HLH"/>
    <property type="match status" value="1"/>
</dbReference>
<dbReference type="Pfam" id="PF02344">
    <property type="entry name" value="Myc-LZ"/>
    <property type="match status" value="1"/>
</dbReference>
<dbReference type="Pfam" id="PF01056">
    <property type="entry name" value="Myc_N"/>
    <property type="match status" value="1"/>
</dbReference>
<dbReference type="PIRSF" id="PIRSF001705">
    <property type="entry name" value="Myc_protein"/>
    <property type="match status" value="1"/>
</dbReference>
<dbReference type="PRINTS" id="PR00044">
    <property type="entry name" value="LEUZIPPRMYC"/>
</dbReference>
<dbReference type="SMART" id="SM00353">
    <property type="entry name" value="HLH"/>
    <property type="match status" value="1"/>
</dbReference>
<dbReference type="SUPFAM" id="SSF47459">
    <property type="entry name" value="HLH, helix-loop-helix DNA-binding domain"/>
    <property type="match status" value="1"/>
</dbReference>
<dbReference type="PROSITE" id="PS50888">
    <property type="entry name" value="BHLH"/>
    <property type="match status" value="1"/>
</dbReference>
<accession>P06171</accession>
<accession>Q8AVZ1</accession>
<accession>Q91794</accession>
<comment type="function">
    <text evidence="2">Transcription factor that binds DNA in a non-specific manner, yet also specifically recognizes the core sequence 5'-CAC[GA]TG-3'. Activates the transcription of growth-related genes.</text>
</comment>
<comment type="subunit">
    <text evidence="1">Efficient DNA binding requires dimerization with another bHLH protein. Binds DNA as a heterodimer with MAX (By similarity).</text>
</comment>
<comment type="subcellular location">
    <subcellularLocation>
        <location>Nucleus</location>
    </subcellularLocation>
</comment>
<comment type="developmental stage">
    <text>C-MYC I is active in oocytes, while C-MYC II is active in both oocytes and post-gastrula embryos.</text>
</comment>
<comment type="domain">
    <text evidence="2">The 9aaTAD motif is a transactivation domain present in a large number of yeast and animal transcription factors.</text>
</comment>
<protein>
    <recommendedName>
        <fullName>Transcriptional regulator Myc-A</fullName>
    </recommendedName>
    <alternativeName>
        <fullName>c-Myc I</fullName>
    </alternativeName>
</protein>
<reference key="1">
    <citation type="journal article" date="1986" name="Mol. Cell. Biol.">
        <title>Expression of the c-myc proto-oncogene during development of Xenopus laevis.</title>
        <authorList>
            <person name="King M.W."/>
            <person name="Roberts J.M."/>
            <person name="Eisenman R.N."/>
        </authorList>
    </citation>
    <scope>NUCLEOTIDE SEQUENCE [MRNA]</scope>
</reference>
<reference key="2">
    <citation type="journal article" date="1989" name="EMBO J.">
        <title>Differential expression of two Xenopus c-myc proto-oncogenes during development.</title>
        <authorList>
            <person name="Vriz S."/>
            <person name="Taylor M."/>
            <person name="Mechali M."/>
        </authorList>
    </citation>
    <scope>NUCLEOTIDE SEQUENCE [MRNA]</scope>
    <source>
        <tissue>Oocyte</tissue>
    </source>
</reference>
<reference key="3">
    <citation type="journal article" date="1991" name="Nucleic Acids Res.">
        <title>Developmentally regulated alternative splicing in the Xenopus laevis c-Myc gene creates an intron-1 containing c-Myc RNA present only in post-midblastula embryos.</title>
        <authorList>
            <person name="King M.W."/>
        </authorList>
    </citation>
    <scope>NUCLEOTIDE SEQUENCE [GENOMIC DNA]</scope>
</reference>
<reference key="4">
    <citation type="submission" date="2002-12" db="EMBL/GenBank/DDBJ databases">
        <authorList>
            <consortium name="NIH - Xenopus Gene Collection (XGC) project"/>
        </authorList>
    </citation>
    <scope>NUCLEOTIDE SEQUENCE [LARGE SCALE MRNA]</scope>
    <source>
        <tissue>Embryo</tissue>
    </source>
</reference>
<reference key="5">
    <citation type="journal article" date="1991" name="Nucleic Acids Res.">
        <title>Xenopus laevis c-myc I and II genes: molecular structure and developmental expression.</title>
        <authorList>
            <person name="Principaud E."/>
            <person name="Spohr G."/>
        </authorList>
    </citation>
    <scope>NUCLEOTIDE SEQUENCE [GENOMIC DNA] OF 1-83</scope>
    <source>
        <tissue>Liver</tissue>
    </source>
</reference>
<reference key="6">
    <citation type="journal article" date="1986" name="EMBO J.">
        <title>Xenopus myc proto-oncogene during development: expression as a stable maternal mRNA uncoupled from cell division.</title>
        <authorList>
            <person name="Taylor M.V."/>
            <person name="Gusse M."/>
            <person name="Evan G.I."/>
            <person name="Dathan N."/>
            <person name="Mechali M."/>
        </authorList>
    </citation>
    <scope>NUCLEOTIDE SEQUENCE [MRNA] OF 90-419</scope>
    <source>
        <tissue>Oocyte</tissue>
    </source>
</reference>
<feature type="chain" id="PRO_0000127319" description="Transcriptional regulator Myc-A">
    <location>
        <begin position="1"/>
        <end position="419"/>
    </location>
</feature>
<feature type="domain" description="bHLH" evidence="3">
    <location>
        <begin position="335"/>
        <end position="387"/>
    </location>
</feature>
<feature type="region of interest" description="Disordered" evidence="4">
    <location>
        <begin position="141"/>
        <end position="166"/>
    </location>
</feature>
<feature type="region of interest" description="Disordered" evidence="4">
    <location>
        <begin position="206"/>
        <end position="274"/>
    </location>
</feature>
<feature type="region of interest" description="Disordered" evidence="4">
    <location>
        <begin position="319"/>
        <end position="344"/>
    </location>
</feature>
<feature type="region of interest" description="Leucine-zipper">
    <location>
        <begin position="387"/>
        <end position="415"/>
    </location>
</feature>
<feature type="short sequence motif" description="9aaTAD" evidence="2">
    <location>
        <begin position="78"/>
        <end position="86"/>
    </location>
</feature>
<feature type="compositionally biased region" description="Acidic residues" evidence="4">
    <location>
        <begin position="226"/>
        <end position="245"/>
    </location>
</feature>
<feature type="compositionally biased region" description="Basic and acidic residues" evidence="4">
    <location>
        <begin position="248"/>
        <end position="261"/>
    </location>
</feature>
<feature type="compositionally biased region" description="Polar residues" evidence="4">
    <location>
        <begin position="319"/>
        <end position="328"/>
    </location>
</feature>
<feature type="sequence conflict" description="In Ref. 6; AAA49906." evidence="5" ref="6">
    <original>N</original>
    <variation>R</variation>
    <location>
        <position position="90"/>
    </location>
</feature>
<feature type="sequence conflict" description="In Ref. 2; CAA32911 and 6; AAA49906." evidence="5" ref="2 6">
    <original>P</original>
    <variation>R</variation>
    <location>
        <position position="147"/>
    </location>
</feature>
<feature type="sequence conflict" description="In Ref. 3; CAA37753." evidence="5" ref="3">
    <original>E</original>
    <variation>G</variation>
    <location>
        <position position="228"/>
    </location>
</feature>
<gene>
    <name type="primary">myc-a</name>
    <name type="synonym">myc</name>
    <name type="synonym">myc1</name>
</gene>